<reference evidence="30" key="1">
    <citation type="journal article" date="1998" name="J. Biol. Chem.">
        <title>Identification and cloning of prs a 1, a 32-kDa endochitinase and major allergen of avocado, and its expression in the yeast Pichia pastoris.</title>
        <authorList>
            <person name="Sowka S."/>
            <person name="Hsieh L.S."/>
            <person name="Krebitz M."/>
            <person name="Akasawa A."/>
            <person name="Martin B.M."/>
            <person name="Starrett D."/>
            <person name="Peterbauer C.K."/>
            <person name="Scheiner O."/>
            <person name="Breiteneder H."/>
        </authorList>
    </citation>
    <scope>NUCLEOTIDE SEQUENCE [MRNA]</scope>
    <scope>PROTEIN SEQUENCE OF 26-51; 188-203 AND 226-238</scope>
    <scope>FUNCTION</scope>
    <scope>CATALYTIC ACTIVITY</scope>
    <scope>TISSUE SPECIFICITY</scope>
    <scope>ALLERGEN</scope>
    <source>
        <strain evidence="24">cv. Hass</strain>
        <tissue evidence="24 30">Mesocarp</tissue>
    </source>
</reference>
<reference key="2">
    <citation type="journal article" date="1998" name="J. Allergy Clin. Immunol.">
        <title>Class I chitinases with hevein-like domain, but not class II enzymes, are relevant chestnut and avocado allergens.</title>
        <authorList>
            <person name="Diaz-Perales A."/>
            <person name="Collada C."/>
            <person name="Blanco C."/>
            <person name="Sanchez-Monge R."/>
            <person name="Carrillo T."/>
            <person name="Aragoncillo C."/>
            <person name="Salcedo G."/>
        </authorList>
    </citation>
    <scope>PROTEIN SEQUENCE OF 26-52</scope>
    <scope>CATALYTIC ACTIVITY</scope>
    <scope>CHITIN-BINDING</scope>
    <scope>TISSUE SPECIFICITY</scope>
    <scope>ALLERGEN</scope>
    <source>
        <tissue evidence="23">Fruit flesh</tissue>
    </source>
</reference>
<reference key="3">
    <citation type="journal article" date="1999" name="Clin. Exp. Allergy">
        <title>Class I endochitinase containing a hevein domain is the causative allergen in latex-associated avocado allergy.</title>
        <authorList>
            <person name="Posch A."/>
            <person name="Wheeler C.H."/>
            <person name="Chen Z."/>
            <person name="Flagge A."/>
            <person name="Dunn M.J."/>
            <person name="Papenfuss F."/>
            <person name="Raulf-Heimsoth M."/>
            <person name="Baur X."/>
        </authorList>
    </citation>
    <scope>PROTEIN SEQUENCE OF 26-40</scope>
    <scope>CHITIN-BINDING</scope>
    <scope>ALLERGEN</scope>
    <source>
        <tissue evidence="15">Fruit</tissue>
    </source>
</reference>
<reference key="4">
    <citation type="journal article" date="2003" name="J. Allergy Clin. Immunol.">
        <title>Analysis of avocado allergen (Prs a 1) IgE-binding peptides generated by simulated gastric fluid digestion.</title>
        <authorList>
            <person name="Diaz-Perales A."/>
            <person name="Blanco C."/>
            <person name="Sanchez-Monge R."/>
            <person name="Varela J."/>
            <person name="Carrillo T."/>
            <person name="Salcedo G."/>
        </authorList>
    </citation>
    <scope>PROTEIN SEQUENCE OF 26-30; 62-65; 220-223; 270-276; 299-303 AND 307-313</scope>
    <scope>TISSUE SPECIFICITY</scope>
    <scope>IDENTIFICATION BY MASS SPECTROMETRY</scope>
    <scope>ALLERGEN</scope>
    <source>
        <tissue evidence="18">Fruit</tissue>
    </source>
</reference>
<reference key="5">
    <citation type="journal article" date="1999" name="J. Allergy Clin. Immunol.">
        <title>Cross-reactions in the latex-fruit syndrome: A relevant role of chitinases but not of complex asparagine-linked glycans.</title>
        <authorList>
            <person name="Diaz-Perales A."/>
            <person name="Collada C."/>
            <person name="Blanco C."/>
            <person name="Sanchez-Monge R."/>
            <person name="Carrillo T."/>
            <person name="Aragoncillo C."/>
            <person name="Salcedo G."/>
        </authorList>
    </citation>
    <scope>ALLERGEN</scope>
</reference>
<reference key="6">
    <citation type="journal article" date="2000" name="J. Allergy Clin. Immunol.">
        <title>Class I chitinases, the panallergens responsible for the latex-fruit syndrome, are induced by ethylene treatment and inactivated by heating.</title>
        <authorList>
            <person name="Sanchez-Monge R."/>
            <person name="Blanco C."/>
            <person name="Perales A.D."/>
            <person name="Collada C."/>
            <person name="Carrillo T."/>
            <person name="Aragoncillo C."/>
            <person name="Salcedo G."/>
        </authorList>
    </citation>
    <scope>ALLERGEN</scope>
</reference>
<reference key="7">
    <citation type="journal article" date="2005" name="J. Investig. Allergol. Clin. Immunol.">
        <title>Latex-vegetable syndrome due to custard apple and aubergine: new variations of the hevein symphony.</title>
        <authorList>
            <person name="Gamboa P.M."/>
            <person name="Sanchez-Monge R."/>
            <person name="Diaz-Perales A."/>
            <person name="Salcedo G."/>
            <person name="Ansotegui J."/>
            <person name="Sanz M.L."/>
        </authorList>
    </citation>
    <scope>ALLERGEN</scope>
</reference>
<reference key="8">
    <citation type="journal article" date="2008" name="Clin. Exp. Allergy">
        <title>Immunoglobulin E recognition patterns to purified Kiwifruit (Actinidinia deliciosa) allergens in patients sensitized to Kiwi with different clinical symptoms.</title>
        <authorList>
            <person name="Palacin A."/>
            <person name="Rodriguez J."/>
            <person name="Blanco C."/>
            <person name="Lopez-Torrejon G."/>
            <person name="Sanchez-Monge R."/>
            <person name="Varela J."/>
            <person name="Jimenez M.A."/>
            <person name="Cumplido J."/>
            <person name="Carrillo T."/>
            <person name="Crespo J.F."/>
            <person name="Salcedo G."/>
        </authorList>
    </citation>
    <scope>ALLERGEN</scope>
</reference>
<reference key="9">
    <citation type="journal article" date="2011" name="Pediatr. Allergy Immunol.">
        <title>Sensitization profiles to purified plant food allergens among pediatric patients with allergy to banana.</title>
        <authorList>
            <person name="Palacin A."/>
            <person name="Quirce S."/>
            <person name="Sanchez-Monge R."/>
            <person name="Bobolea I."/>
            <person name="Diaz-Perales A."/>
            <person name="Martin-Munoz F."/>
            <person name="Pascual C."/>
            <person name="Salcedo G."/>
        </authorList>
    </citation>
    <scope>ALLERGEN</scope>
</reference>
<reference key="10">
    <citation type="journal article" date="2012" name="Electrophoresis">
        <title>Identification of avocado (Persea americana) pulp proteins by nano-LC-MS/MS via combinatorial peptide ligand libraries.</title>
        <authorList>
            <person name="Esteve C."/>
            <person name="D'Amato A."/>
            <person name="Marina M.L."/>
            <person name="Garcia M.C."/>
            <person name="Righetti P.G."/>
        </authorList>
    </citation>
    <scope>IDENTIFICATION BY MASS SPECTROMETRY</scope>
    <scope>TISSUE SPECIFICITY</scope>
</reference>
<organism evidence="30">
    <name type="scientific">Persea americana</name>
    <name type="common">Avocado</name>
    <dbReference type="NCBI Taxonomy" id="3435"/>
    <lineage>
        <taxon>Eukaryota</taxon>
        <taxon>Viridiplantae</taxon>
        <taxon>Streptophyta</taxon>
        <taxon>Embryophyta</taxon>
        <taxon>Tracheophyta</taxon>
        <taxon>Spermatophyta</taxon>
        <taxon>Magnoliopsida</taxon>
        <taxon>Magnoliidae</taxon>
        <taxon>Laurales</taxon>
        <taxon>Lauraceae</taxon>
        <taxon>Persea</taxon>
    </lineage>
</organism>
<name>CHIT_PERAE</name>
<evidence type="ECO:0000255" key="1"/>
<evidence type="ECO:0000255" key="2">
    <source>
        <dbReference type="PIRSR" id="PIRSR001060-1"/>
    </source>
</evidence>
<evidence type="ECO:0000255" key="3">
    <source>
        <dbReference type="PIRSR" id="PIRSR001060-2"/>
    </source>
</evidence>
<evidence type="ECO:0000255" key="4">
    <source>
        <dbReference type="PROSITE-ProRule" id="PRU00261"/>
    </source>
</evidence>
<evidence type="ECO:0000269" key="5">
    <source>
    </source>
</evidence>
<evidence type="ECO:0000269" key="6">
    <source>
    </source>
</evidence>
<evidence type="ECO:0000269" key="7">
    <source>
    </source>
</evidence>
<evidence type="ECO:0000269" key="8">
    <source>
    </source>
</evidence>
<evidence type="ECO:0000269" key="9">
    <source>
    </source>
</evidence>
<evidence type="ECO:0000269" key="10">
    <source>
    </source>
</evidence>
<evidence type="ECO:0000269" key="11">
    <source>
    </source>
</evidence>
<evidence type="ECO:0000269" key="12">
    <source>
    </source>
</evidence>
<evidence type="ECO:0000269" key="13">
    <source>
    </source>
</evidence>
<evidence type="ECO:0000269" key="14">
    <source>
    </source>
</evidence>
<evidence type="ECO:0000303" key="15">
    <source>
    </source>
</evidence>
<evidence type="ECO:0000303" key="16">
    <source>
    </source>
</evidence>
<evidence type="ECO:0000303" key="17">
    <source>
    </source>
</evidence>
<evidence type="ECO:0000303" key="18">
    <source>
    </source>
</evidence>
<evidence type="ECO:0000303" key="19">
    <source>
    </source>
</evidence>
<evidence type="ECO:0000303" key="20">
    <source>
    </source>
</evidence>
<evidence type="ECO:0000303" key="21">
    <source>
    </source>
</evidence>
<evidence type="ECO:0000303" key="22">
    <source>
    </source>
</evidence>
<evidence type="ECO:0000303" key="23">
    <source>
    </source>
</evidence>
<evidence type="ECO:0000303" key="24">
    <source>
    </source>
</evidence>
<evidence type="ECO:0000305" key="25"/>
<evidence type="ECO:0000305" key="26">
    <source>
    </source>
</evidence>
<evidence type="ECO:0000305" key="27">
    <source>
    </source>
</evidence>
<evidence type="ECO:0000305" key="28">
    <source>
    </source>
</evidence>
<evidence type="ECO:0000305" key="29">
    <source>
    </source>
</evidence>
<evidence type="ECO:0000312" key="30">
    <source>
        <dbReference type="EMBL" id="CAB01591.1"/>
    </source>
</evidence>
<sequence>MVYCTASLPLLLLLLVGLLAGEAFAEQCGRQAGGALCPGGLCCSQFGWCGSTSDYCGPTCQSQCGGVTPSPGGGVASLISQSVFNQMLKHRNDAACQAKGFYTYNAFIAAANSFNGFASVGDTATRKREIAAFLAQTSHETTGGWATAPDGPYAWGYCFLKEQGNPPDYCVPTAQWPCAPGKKYYGRGPIQISYNYNYGPAGRAIGYDLINNPDAVATDPVISFKTALWFWMTPQSPKPSCHNVITGRWTPSAADRAAGRLPGYGVITNIINGGIECGKGFNDKVADRIGFYKRYCDLLGVSYGSNLDCYNQRSFGVSTNPLAASS</sequence>
<feature type="signal peptide" evidence="1 5 8 13 14">
    <location>
        <begin position="1"/>
        <end position="25"/>
    </location>
</feature>
<feature type="chain" id="PRO_5004161896" description="Endochitinase" evidence="1 26 27 28 29">
    <location>
        <begin position="26"/>
        <end position="326"/>
    </location>
</feature>
<feature type="domain" description="Chitin-binding type-1" evidence="4 25">
    <location>
        <begin position="26"/>
        <end position="66"/>
    </location>
</feature>
<feature type="active site" description="Proton donor" evidence="2">
    <location>
        <position position="140"/>
    </location>
</feature>
<feature type="disulfide bond" evidence="3 4">
    <location>
        <begin position="28"/>
        <end position="43"/>
    </location>
</feature>
<feature type="disulfide bond" evidence="3 4">
    <location>
        <begin position="37"/>
        <end position="49"/>
    </location>
</feature>
<feature type="disulfide bond" evidence="3 4">
    <location>
        <begin position="42"/>
        <end position="56"/>
    </location>
</feature>
<feature type="disulfide bond" evidence="3 4">
    <location>
        <begin position="60"/>
        <end position="64"/>
    </location>
</feature>
<feature type="disulfide bond" evidence="3">
    <location>
        <begin position="96"/>
        <end position="158"/>
    </location>
</feature>
<feature type="disulfide bond" evidence="3">
    <location>
        <begin position="170"/>
        <end position="178"/>
    </location>
</feature>
<feature type="disulfide bond" evidence="3">
    <location>
        <begin position="277"/>
        <end position="309"/>
    </location>
</feature>
<feature type="sequence conflict" description="In Ref. 1; AA sequence." evidence="25" ref="1">
    <original>R</original>
    <variation>A</variation>
    <location>
        <position position="203"/>
    </location>
</feature>
<dbReference type="EC" id="3.2.1.14" evidence="13 14 30"/>
<dbReference type="EMBL" id="Z78202">
    <property type="protein sequence ID" value="CAB01591.1"/>
    <property type="molecule type" value="mRNA"/>
</dbReference>
<dbReference type="SMR" id="P93680"/>
<dbReference type="Allergome" id="3414">
    <property type="allergen name" value="Pers a 1.0101"/>
</dbReference>
<dbReference type="Allergome" id="546">
    <property type="allergen name" value="Pers a 1"/>
</dbReference>
<dbReference type="CAZy" id="CBM18">
    <property type="family name" value="Carbohydrate-Binding Module Family 18"/>
</dbReference>
<dbReference type="CAZy" id="GH19">
    <property type="family name" value="Glycoside Hydrolase Family 19"/>
</dbReference>
<dbReference type="GO" id="GO:0008061">
    <property type="term" value="F:chitin binding"/>
    <property type="evidence" value="ECO:0000314"/>
    <property type="project" value="UniProtKB"/>
</dbReference>
<dbReference type="GO" id="GO:0004568">
    <property type="term" value="F:chitinase activity"/>
    <property type="evidence" value="ECO:0000314"/>
    <property type="project" value="UniProtKB"/>
</dbReference>
<dbReference type="GO" id="GO:0008843">
    <property type="term" value="F:endochitinase activity"/>
    <property type="evidence" value="ECO:0000314"/>
    <property type="project" value="UniProtKB"/>
</dbReference>
<dbReference type="GO" id="GO:0016998">
    <property type="term" value="P:cell wall macromolecule catabolic process"/>
    <property type="evidence" value="ECO:0007669"/>
    <property type="project" value="InterPro"/>
</dbReference>
<dbReference type="GO" id="GO:0006032">
    <property type="term" value="P:chitin catabolic process"/>
    <property type="evidence" value="ECO:0000314"/>
    <property type="project" value="UniProtKB"/>
</dbReference>
<dbReference type="GO" id="GO:0050832">
    <property type="term" value="P:defense response to fungus"/>
    <property type="evidence" value="ECO:0000314"/>
    <property type="project" value="UniProtKB"/>
</dbReference>
<dbReference type="GO" id="GO:0000272">
    <property type="term" value="P:polysaccharide catabolic process"/>
    <property type="evidence" value="ECO:0007669"/>
    <property type="project" value="UniProtKB-KW"/>
</dbReference>
<dbReference type="CDD" id="cd00325">
    <property type="entry name" value="chitinase_GH19"/>
    <property type="match status" value="1"/>
</dbReference>
<dbReference type="CDD" id="cd06921">
    <property type="entry name" value="ChtBD1_GH19_hevein"/>
    <property type="match status" value="1"/>
</dbReference>
<dbReference type="FunFam" id="3.30.60.10:FF:000001">
    <property type="entry name" value="Basic endochitinase"/>
    <property type="match status" value="1"/>
</dbReference>
<dbReference type="FunFam" id="3.30.20.10:FF:000001">
    <property type="entry name" value="Endochitinase (Chitinase)"/>
    <property type="match status" value="1"/>
</dbReference>
<dbReference type="Gene3D" id="1.10.530.10">
    <property type="match status" value="1"/>
</dbReference>
<dbReference type="Gene3D" id="3.30.20.10">
    <property type="entry name" value="Endochitinase, domain 2"/>
    <property type="match status" value="1"/>
</dbReference>
<dbReference type="Gene3D" id="3.30.60.10">
    <property type="entry name" value="Endochitinase-like"/>
    <property type="match status" value="1"/>
</dbReference>
<dbReference type="InterPro" id="IPR001002">
    <property type="entry name" value="Chitin-bd_1"/>
</dbReference>
<dbReference type="InterPro" id="IPR018371">
    <property type="entry name" value="Chitin-binding_1_CS"/>
</dbReference>
<dbReference type="InterPro" id="IPR036861">
    <property type="entry name" value="Endochitinase-like_sf"/>
</dbReference>
<dbReference type="InterPro" id="IPR016283">
    <property type="entry name" value="Glyco_hydro_19"/>
</dbReference>
<dbReference type="InterPro" id="IPR000726">
    <property type="entry name" value="Glyco_hydro_19_cat"/>
</dbReference>
<dbReference type="InterPro" id="IPR023346">
    <property type="entry name" value="Lysozyme-like_dom_sf"/>
</dbReference>
<dbReference type="PANTHER" id="PTHR22595:SF79">
    <property type="entry name" value="CHITINASE 12"/>
    <property type="match status" value="1"/>
</dbReference>
<dbReference type="PANTHER" id="PTHR22595">
    <property type="entry name" value="CHITINASE-RELATED"/>
    <property type="match status" value="1"/>
</dbReference>
<dbReference type="Pfam" id="PF00187">
    <property type="entry name" value="Chitin_bind_1"/>
    <property type="match status" value="1"/>
</dbReference>
<dbReference type="Pfam" id="PF00182">
    <property type="entry name" value="Glyco_hydro_19"/>
    <property type="match status" value="1"/>
</dbReference>
<dbReference type="PIRSF" id="PIRSF001060">
    <property type="entry name" value="Endochitinase"/>
    <property type="match status" value="1"/>
</dbReference>
<dbReference type="PRINTS" id="PR00451">
    <property type="entry name" value="CHITINBINDNG"/>
</dbReference>
<dbReference type="SMART" id="SM00270">
    <property type="entry name" value="ChtBD1"/>
    <property type="match status" value="1"/>
</dbReference>
<dbReference type="SUPFAM" id="SSF53955">
    <property type="entry name" value="Lysozyme-like"/>
    <property type="match status" value="1"/>
</dbReference>
<dbReference type="SUPFAM" id="SSF57016">
    <property type="entry name" value="Plant lectins/antimicrobial peptides"/>
    <property type="match status" value="1"/>
</dbReference>
<dbReference type="PROSITE" id="PS00026">
    <property type="entry name" value="CHIT_BIND_I_1"/>
    <property type="match status" value="1"/>
</dbReference>
<dbReference type="PROSITE" id="PS50941">
    <property type="entry name" value="CHIT_BIND_I_2"/>
    <property type="match status" value="1"/>
</dbReference>
<dbReference type="PROSITE" id="PS00773">
    <property type="entry name" value="CHITINASE_19_1"/>
    <property type="match status" value="1"/>
</dbReference>
<dbReference type="PROSITE" id="PS00774">
    <property type="entry name" value="CHITINASE_19_2"/>
    <property type="match status" value="1"/>
</dbReference>
<proteinExistence type="evidence at protein level"/>
<comment type="function">
    <text evidence="14">Defense against chitin-containing fungal pathogens. Has in vitro antifungal activity against F.oxysporum inhibiting its growth and the branching of its hyphae. Has endochitinase activity, but no exochitinase or lysozyme activities.</text>
</comment>
<comment type="catalytic activity">
    <reaction evidence="13 14">
        <text>Random endo-hydrolysis of N-acetyl-beta-D-glucosaminide (1-&gt;4)-beta-linkages in chitin and chitodextrins.</text>
        <dbReference type="EC" id="3.2.1.14"/>
    </reaction>
</comment>
<comment type="tissue specificity">
    <text evidence="8 12 13 14">Expressed in the pulp of the fruit (at protein level) (PubMed:14610495, PubMed:23019098, PubMed:9679856). Expressed in mesocarp (at protein level) (PubMed:9774427).</text>
</comment>
<comment type="allergen">
    <text evidence="5 6 7 8 9 10 11 13 14">Causes an allergic reaction in human (PubMed:10231327, PubMed:10482846, PubMed:10887324, PubMed:14610495, PubMed:16433216, PubMed:18205857, PubMed:21284746, PubMed:9679856, PubMed:9774427). Involved (at least via the N-terminal chitin-binding hevein-like domain) in cross-reactions with natural rubber latex (latex-fruit allergy syndrome) (PubMed:10231327, PubMed:10482846, PubMed:10887324, PubMed:14610495, PubMed:16433216, PubMed:9679856, PubMed:9774427). Binds to IgE of patients allergic to avocado, chestnut and/or banana (PubMed:10482846, PubMed:16433216, PubMed:21284746, PubMed:9679856). Binds to IgE in 75% of the 20 patients tested allergic to latex (PubMed:9774427). Binds to IgE in 80% of the 15 patients tested allergic to avocado and latex (PubMed:10231327). Binds to IgE in 53% of the 92 and 38% of the 26 kiwifruit-allergic patients tested by ELISA and IgE immunodetection assays, respectively. Only 12% of the 25 kiwifruit-allergic patients tested are found positive by skin prick test (PubMed:18205857). Binds to IgE in 29% of the 51 pediatric patients tested allergic to banana (PubMed:21284746). IgE-binding is not abolished by digestion with artificial gastric juice or simulated gastric fluid (PubMed:10231327, PubMed:14610495). In vitro IgE-binding and in vivo allergenicity (skin prick test) is abolished by heating (PubMed:10887324). Induces degranulation of human basohphils and histamine release (PubMed:16433216).</text>
</comment>
<comment type="similarity">
    <text evidence="25">Belongs to the glycosyl hydrolase 19 family. Chitinase class I subfamily.</text>
</comment>
<keyword id="KW-0020">Allergen</keyword>
<keyword id="KW-0929">Antimicrobial</keyword>
<keyword id="KW-0119">Carbohydrate metabolism</keyword>
<keyword id="KW-0146">Chitin degradation</keyword>
<keyword id="KW-0147">Chitin-binding</keyword>
<keyword id="KW-0903">Direct protein sequencing</keyword>
<keyword id="KW-1015">Disulfide bond</keyword>
<keyword id="KW-0326">Glycosidase</keyword>
<keyword id="KW-0378">Hydrolase</keyword>
<keyword id="KW-0568">Pathogenesis-related protein</keyword>
<keyword id="KW-0611">Plant defense</keyword>
<keyword id="KW-0624">Polysaccharide degradation</keyword>
<keyword id="KW-0732">Signal</keyword>
<accession>P93680</accession>
<gene>
    <name evidence="30" type="primary">chi1</name>
</gene>
<protein>
    <recommendedName>
        <fullName evidence="15 24 30">Endochitinase</fullName>
        <ecNumber evidence="13 14 30">3.2.1.14</ecNumber>
    </recommendedName>
    <alternativeName>
        <fullName evidence="20 21 22">Allergen Pers a 1</fullName>
    </alternativeName>
    <alternativeName>
        <fullName evidence="16 17 18 19 24">Allergen Prs a 1</fullName>
    </alternativeName>
    <alternativeName>
        <fullName evidence="15">Chitin-binding avocado protein</fullName>
        <shortName evidence="15">CBAP</shortName>
    </alternativeName>
    <alternativeName>
        <fullName evidence="15 16 20 23">Class I chitinase</fullName>
    </alternativeName>
    <alternativeName>
        <fullName evidence="23">PaI1</fullName>
    </alternativeName>
    <allergenName evidence="25">Pers a 1.0101</allergenName>
</protein>